<feature type="chain" id="PRO_1000090417" description="UDP-N-acetylglucosamine--N-acetylmuramyl-(pentapeptide) pyrophosphoryl-undecaprenol N-acetylglucosamine transferase">
    <location>
        <begin position="1"/>
        <end position="352"/>
    </location>
</feature>
<feature type="binding site" evidence="1">
    <location>
        <begin position="14"/>
        <end position="16"/>
    </location>
    <ligand>
        <name>UDP-N-acetyl-alpha-D-glucosamine</name>
        <dbReference type="ChEBI" id="CHEBI:57705"/>
    </ligand>
</feature>
<feature type="binding site" evidence="1">
    <location>
        <position position="124"/>
    </location>
    <ligand>
        <name>UDP-N-acetyl-alpha-D-glucosamine</name>
        <dbReference type="ChEBI" id="CHEBI:57705"/>
    </ligand>
</feature>
<feature type="binding site" evidence="1">
    <location>
        <position position="164"/>
    </location>
    <ligand>
        <name>UDP-N-acetyl-alpha-D-glucosamine</name>
        <dbReference type="ChEBI" id="CHEBI:57705"/>
    </ligand>
</feature>
<feature type="binding site" evidence="1">
    <location>
        <position position="185"/>
    </location>
    <ligand>
        <name>UDP-N-acetyl-alpha-D-glucosamine</name>
        <dbReference type="ChEBI" id="CHEBI:57705"/>
    </ligand>
</feature>
<feature type="binding site" evidence="1">
    <location>
        <position position="285"/>
    </location>
    <ligand>
        <name>UDP-N-acetyl-alpha-D-glucosamine</name>
        <dbReference type="ChEBI" id="CHEBI:57705"/>
    </ligand>
</feature>
<organism>
    <name type="scientific">Chlamydia trachomatis serovar L2 (strain ATCC VR-902B / DSM 19102 / 434/Bu)</name>
    <dbReference type="NCBI Taxonomy" id="471472"/>
    <lineage>
        <taxon>Bacteria</taxon>
        <taxon>Pseudomonadati</taxon>
        <taxon>Chlamydiota</taxon>
        <taxon>Chlamydiia</taxon>
        <taxon>Chlamydiales</taxon>
        <taxon>Chlamydiaceae</taxon>
        <taxon>Chlamydia/Chlamydophila group</taxon>
        <taxon>Chlamydia</taxon>
    </lineage>
</organism>
<name>MURG_CHLT2</name>
<reference key="1">
    <citation type="journal article" date="2008" name="Genome Res.">
        <title>Chlamydia trachomatis: genome sequence analysis of lymphogranuloma venereum isolates.</title>
        <authorList>
            <person name="Thomson N.R."/>
            <person name="Holden M.T.G."/>
            <person name="Carder C."/>
            <person name="Lennard N."/>
            <person name="Lockey S.J."/>
            <person name="Marsh P."/>
            <person name="Skipp P."/>
            <person name="O'Connor C.D."/>
            <person name="Goodhead I."/>
            <person name="Norbertzcak H."/>
            <person name="Harris B."/>
            <person name="Ormond D."/>
            <person name="Rance R."/>
            <person name="Quail M.A."/>
            <person name="Parkhill J."/>
            <person name="Stephens R.S."/>
            <person name="Clarke I.N."/>
        </authorList>
    </citation>
    <scope>NUCLEOTIDE SEQUENCE [LARGE SCALE GENOMIC DNA]</scope>
    <source>
        <strain>ATCC VR-902B / DSM 19102 / 434/Bu</strain>
    </source>
</reference>
<sequence length="352" mass="38404">MKKINKIVLAVGGTGGHIIPALAARETFIHEDIEVLLLGKGLAHFLGDDSEIAYCDIPSGSPFSLRVNRMFSGAKQLYKGYVAALQKIRDFTPDLAIGFGSYHSLPAMLASIRSRIPLFLHEQNIVPGKVNKLFSRFAKGVGMSFAAAGEHFHCRAEEVFLPIRKLSEQIVFPGASPVICVVGGSQGAKILNDVVPKALARIRESYSNLYVHHIVGPKGDLQAVSQVYQDAGINHTVTAFDHNMLGVLQASDLVISRSGATMLNELLWVQVPAILIPYPGAYGHQEVNAKFFTHTVGGGTMILQKYLTEESLSKQVLLALDPATSENRRKAMLSAQQKKSFKSLYQFICESL</sequence>
<protein>
    <recommendedName>
        <fullName evidence="1">UDP-N-acetylglucosamine--N-acetylmuramyl-(pentapeptide) pyrophosphoryl-undecaprenol N-acetylglucosamine transferase</fullName>
        <ecNumber evidence="1">2.4.1.227</ecNumber>
    </recommendedName>
    <alternativeName>
        <fullName evidence="1">Undecaprenyl-PP-MurNAc-pentapeptide-UDPGlcNAc GlcNAc transferase</fullName>
    </alternativeName>
</protein>
<proteinExistence type="inferred from homology"/>
<accession>B0B8Y7</accession>
<evidence type="ECO:0000255" key="1">
    <source>
        <dbReference type="HAMAP-Rule" id="MF_00033"/>
    </source>
</evidence>
<keyword id="KW-0131">Cell cycle</keyword>
<keyword id="KW-0132">Cell division</keyword>
<keyword id="KW-0997">Cell inner membrane</keyword>
<keyword id="KW-1003">Cell membrane</keyword>
<keyword id="KW-0133">Cell shape</keyword>
<keyword id="KW-0961">Cell wall biogenesis/degradation</keyword>
<keyword id="KW-0328">Glycosyltransferase</keyword>
<keyword id="KW-0472">Membrane</keyword>
<keyword id="KW-0573">Peptidoglycan synthesis</keyword>
<keyword id="KW-0808">Transferase</keyword>
<gene>
    <name evidence="1" type="primary">murG</name>
    <name type="ordered locus">CTL0130</name>
</gene>
<comment type="function">
    <text evidence="1">Cell wall formation. Catalyzes the transfer of a GlcNAc subunit on undecaprenyl-pyrophosphoryl-MurNAc-pentapeptide (lipid intermediate I) to form undecaprenyl-pyrophosphoryl-MurNAc-(pentapeptide)GlcNAc (lipid intermediate II).</text>
</comment>
<comment type="catalytic activity">
    <reaction evidence="1">
        <text>di-trans,octa-cis-undecaprenyl diphospho-N-acetyl-alpha-D-muramoyl-L-alanyl-D-glutamyl-meso-2,6-diaminopimeloyl-D-alanyl-D-alanine + UDP-N-acetyl-alpha-D-glucosamine = di-trans,octa-cis-undecaprenyl diphospho-[N-acetyl-alpha-D-glucosaminyl-(1-&gt;4)]-N-acetyl-alpha-D-muramoyl-L-alanyl-D-glutamyl-meso-2,6-diaminopimeloyl-D-alanyl-D-alanine + UDP + H(+)</text>
        <dbReference type="Rhea" id="RHEA:31227"/>
        <dbReference type="ChEBI" id="CHEBI:15378"/>
        <dbReference type="ChEBI" id="CHEBI:57705"/>
        <dbReference type="ChEBI" id="CHEBI:58223"/>
        <dbReference type="ChEBI" id="CHEBI:61387"/>
        <dbReference type="ChEBI" id="CHEBI:61388"/>
        <dbReference type="EC" id="2.4.1.227"/>
    </reaction>
</comment>
<comment type="pathway">
    <text evidence="1">Cell wall biogenesis; peptidoglycan biosynthesis.</text>
</comment>
<comment type="subcellular location">
    <subcellularLocation>
        <location evidence="1">Cell inner membrane</location>
        <topology evidence="1">Peripheral membrane protein</topology>
        <orientation evidence="1">Cytoplasmic side</orientation>
    </subcellularLocation>
</comment>
<comment type="similarity">
    <text evidence="1">Belongs to the glycosyltransferase 28 family. MurG subfamily.</text>
</comment>
<dbReference type="EC" id="2.4.1.227" evidence="1"/>
<dbReference type="EMBL" id="AM884176">
    <property type="protein sequence ID" value="CAP03574.1"/>
    <property type="molecule type" value="Genomic_DNA"/>
</dbReference>
<dbReference type="RefSeq" id="WP_009872909.1">
    <property type="nucleotide sequence ID" value="NC_010287.1"/>
</dbReference>
<dbReference type="RefSeq" id="YP_001654221.1">
    <property type="nucleotide sequence ID" value="NC_010287.1"/>
</dbReference>
<dbReference type="SMR" id="B0B8Y7"/>
<dbReference type="CAZy" id="GT28">
    <property type="family name" value="Glycosyltransferase Family 28"/>
</dbReference>
<dbReference type="KEGG" id="ctb:CTL0130"/>
<dbReference type="PATRIC" id="fig|471472.4.peg.141"/>
<dbReference type="HOGENOM" id="CLU_037404_2_1_0"/>
<dbReference type="UniPathway" id="UPA00219"/>
<dbReference type="Proteomes" id="UP001154402">
    <property type="component" value="Chromosome"/>
</dbReference>
<dbReference type="GO" id="GO:0005886">
    <property type="term" value="C:plasma membrane"/>
    <property type="evidence" value="ECO:0007669"/>
    <property type="project" value="UniProtKB-SubCell"/>
</dbReference>
<dbReference type="GO" id="GO:0051991">
    <property type="term" value="F:UDP-N-acetyl-D-glucosamine:N-acetylmuramoyl-L-alanyl-D-glutamyl-meso-2,6-diaminopimelyl-D-alanyl-D-alanine-diphosphoundecaprenol 4-beta-N-acetylglucosaminlytransferase activity"/>
    <property type="evidence" value="ECO:0007669"/>
    <property type="project" value="RHEA"/>
</dbReference>
<dbReference type="GO" id="GO:0050511">
    <property type="term" value="F:undecaprenyldiphospho-muramoylpentapeptide beta-N-acetylglucosaminyltransferase activity"/>
    <property type="evidence" value="ECO:0007669"/>
    <property type="project" value="UniProtKB-UniRule"/>
</dbReference>
<dbReference type="GO" id="GO:0005975">
    <property type="term" value="P:carbohydrate metabolic process"/>
    <property type="evidence" value="ECO:0007669"/>
    <property type="project" value="InterPro"/>
</dbReference>
<dbReference type="GO" id="GO:0051301">
    <property type="term" value="P:cell division"/>
    <property type="evidence" value="ECO:0007669"/>
    <property type="project" value="UniProtKB-KW"/>
</dbReference>
<dbReference type="GO" id="GO:0071555">
    <property type="term" value="P:cell wall organization"/>
    <property type="evidence" value="ECO:0007669"/>
    <property type="project" value="UniProtKB-KW"/>
</dbReference>
<dbReference type="GO" id="GO:0030259">
    <property type="term" value="P:lipid glycosylation"/>
    <property type="evidence" value="ECO:0007669"/>
    <property type="project" value="UniProtKB-UniRule"/>
</dbReference>
<dbReference type="GO" id="GO:0009252">
    <property type="term" value="P:peptidoglycan biosynthetic process"/>
    <property type="evidence" value="ECO:0007669"/>
    <property type="project" value="UniProtKB-UniRule"/>
</dbReference>
<dbReference type="GO" id="GO:0008360">
    <property type="term" value="P:regulation of cell shape"/>
    <property type="evidence" value="ECO:0007669"/>
    <property type="project" value="UniProtKB-KW"/>
</dbReference>
<dbReference type="CDD" id="cd03785">
    <property type="entry name" value="GT28_MurG"/>
    <property type="match status" value="1"/>
</dbReference>
<dbReference type="Gene3D" id="3.40.50.2000">
    <property type="entry name" value="Glycogen Phosphorylase B"/>
    <property type="match status" value="2"/>
</dbReference>
<dbReference type="HAMAP" id="MF_00033">
    <property type="entry name" value="MurG"/>
    <property type="match status" value="1"/>
</dbReference>
<dbReference type="InterPro" id="IPR006009">
    <property type="entry name" value="GlcNAc_MurG"/>
</dbReference>
<dbReference type="InterPro" id="IPR007235">
    <property type="entry name" value="Glyco_trans_28_C"/>
</dbReference>
<dbReference type="InterPro" id="IPR004276">
    <property type="entry name" value="GlycoTrans_28_N"/>
</dbReference>
<dbReference type="NCBIfam" id="TIGR01133">
    <property type="entry name" value="murG"/>
    <property type="match status" value="1"/>
</dbReference>
<dbReference type="PANTHER" id="PTHR21015:SF22">
    <property type="entry name" value="GLYCOSYLTRANSFERASE"/>
    <property type="match status" value="1"/>
</dbReference>
<dbReference type="PANTHER" id="PTHR21015">
    <property type="entry name" value="UDP-N-ACETYLGLUCOSAMINE--N-ACETYLMURAMYL-(PENTAPEPTIDE) PYROPHOSPHORYL-UNDECAPRENOL N-ACETYLGLUCOSAMINE TRANSFERASE 1"/>
    <property type="match status" value="1"/>
</dbReference>
<dbReference type="Pfam" id="PF04101">
    <property type="entry name" value="Glyco_tran_28_C"/>
    <property type="match status" value="1"/>
</dbReference>
<dbReference type="Pfam" id="PF03033">
    <property type="entry name" value="Glyco_transf_28"/>
    <property type="match status" value="1"/>
</dbReference>
<dbReference type="SUPFAM" id="SSF53756">
    <property type="entry name" value="UDP-Glycosyltransferase/glycogen phosphorylase"/>
    <property type="match status" value="1"/>
</dbReference>